<evidence type="ECO:0000255" key="1">
    <source>
        <dbReference type="HAMAP-Rule" id="MF_03002"/>
    </source>
</evidence>
<evidence type="ECO:0000255" key="2">
    <source>
        <dbReference type="PROSITE-ProRule" id="PRU01185"/>
    </source>
</evidence>
<evidence type="ECO:0000256" key="3">
    <source>
        <dbReference type="SAM" id="MobiDB-lite"/>
    </source>
</evidence>
<organism>
    <name type="scientific">Neosartorya fischeri (strain ATCC 1020 / DSM 3700 / CBS 544.65 / FGSC A1164 / JCM 1740 / NRRL 181 / WB 181)</name>
    <name type="common">Aspergillus fischerianus</name>
    <dbReference type="NCBI Taxonomy" id="331117"/>
    <lineage>
        <taxon>Eukaryota</taxon>
        <taxon>Fungi</taxon>
        <taxon>Dikarya</taxon>
        <taxon>Ascomycota</taxon>
        <taxon>Pezizomycotina</taxon>
        <taxon>Eurotiomycetes</taxon>
        <taxon>Eurotiomycetidae</taxon>
        <taxon>Eurotiales</taxon>
        <taxon>Aspergillaceae</taxon>
        <taxon>Aspergillus</taxon>
        <taxon>Aspergillus subgen. Fumigati</taxon>
    </lineage>
</organism>
<sequence>MSSRFFYGGGSDSDSSSSDEEELYSDREEEEKSEEEESSEEEDETSEEEESDEETGAKKFLKDVASDSEEEEEEEKVTVVKSAKDKRLDELENTIKLIENAKKINDWAVISTEFDKLNRQVAKITQSGPTPKIYIKTVADLEDFVNETVAKQKSGDKKLNASQAKGFNAAKQRIKKNNKDYANLINKYRKDKEDFMESDDEEATPVIAAPRITKLERIEAPAAAIDDDGFATVGRGGKTLQYTPESILKHLRVIVESRGKKNTDRMEQIRTMEKLLEVAQTPYQRIRVYLTLISTRFDLTSTSSANYMAVDQWKSAEQDFSSLLSVLENNRDHVVSEGAEEWEDDEKQPTIAPGETLYIPGSIVSFAERLDDELTRSLQHIDPHTAEYIERLSDEKLLYTDLVRAQAYVEGLNEAEKTDPRQDSVNRVVMRRLEHVYFKPSQVITILEDATWKALPSELDSSITPRASSGNVENLVLSLCNYLFKYSDGIIRARAMLCQIYFLALHDQYYRSRDLMLMSHLTENISNFDVSTQILFNRTLVQIGLCAFRSGLIYEAQNTLSEVCGSGRQKELLAQGIIMQRYSTVSPEQERLERQRQLPFHMHINLELLECIYLTSSMFLEVPLMAQTSSSPEMKRRVISKTFRRMLDYNERQVFTGPAENTRDGVIMSAKFLAAGDWKKAAEMLNSIKIWDLMPQPDKIKEMLSQQIQEEGLRTYLFTYAPFYDSLSIATLSNMFELSEKKISAIISRMISHEELAAALDQVNNAIVFRKGVELSRLQSQIVTLADKSMNLLEANEKTLEQRTQGMANAFQRDQGAGARGGRGSGRGGQARGGPRFPGGQQGRRPGGQQFGGGALGGAIKA</sequence>
<keyword id="KW-0963">Cytoplasm</keyword>
<keyword id="KW-0396">Initiation factor</keyword>
<keyword id="KW-0648">Protein biosynthesis</keyword>
<keyword id="KW-1185">Reference proteome</keyword>
<comment type="function">
    <text evidence="1">Component of the eukaryotic translation initiation factor 3 (eIF-3) complex, which is involved in protein synthesis of a specialized repertoire of mRNAs and, together with other initiation factors, stimulates binding of mRNA and methionyl-tRNAi to the 40S ribosome. The eIF-3 complex specifically targets and initiates translation of a subset of mRNAs involved in cell proliferation.</text>
</comment>
<comment type="subunit">
    <text evidence="1">Component of the eukaryotic translation initiation factor 3 (eIF-3) complex.</text>
</comment>
<comment type="subcellular location">
    <subcellularLocation>
        <location evidence="1">Cytoplasm</location>
    </subcellularLocation>
</comment>
<comment type="similarity">
    <text evidence="1">Belongs to the eIF-3 subunit C family.</text>
</comment>
<accession>A1D9P1</accession>
<name>EIF3C_NEOFI</name>
<protein>
    <recommendedName>
        <fullName evidence="1">Eukaryotic translation initiation factor 3 subunit C</fullName>
        <shortName evidence="1">eIF3c</shortName>
    </recommendedName>
    <alternativeName>
        <fullName evidence="1">Eukaryotic translation initiation factor 3 93 kDa subunit homolog</fullName>
        <shortName evidence="1">eIF3 p93</shortName>
    </alternativeName>
    <alternativeName>
        <fullName evidence="1">Translation initiation factor eIF3, p93 subunit homolog</fullName>
    </alternativeName>
</protein>
<gene>
    <name type="primary">nip1</name>
    <name type="ORF">NFIA_029540</name>
</gene>
<feature type="chain" id="PRO_0000364286" description="Eukaryotic translation initiation factor 3 subunit C">
    <location>
        <begin position="1"/>
        <end position="862"/>
    </location>
</feature>
<feature type="domain" description="PCI" evidence="2">
    <location>
        <begin position="600"/>
        <end position="774"/>
    </location>
</feature>
<feature type="region of interest" description="Disordered" evidence="3">
    <location>
        <begin position="1"/>
        <end position="81"/>
    </location>
</feature>
<feature type="region of interest" description="Disordered" evidence="3">
    <location>
        <begin position="813"/>
        <end position="862"/>
    </location>
</feature>
<feature type="compositionally biased region" description="Acidic residues" evidence="3">
    <location>
        <begin position="17"/>
        <end position="54"/>
    </location>
</feature>
<feature type="compositionally biased region" description="Basic and acidic residues" evidence="3">
    <location>
        <begin position="55"/>
        <end position="65"/>
    </location>
</feature>
<feature type="compositionally biased region" description="Acidic residues" evidence="3">
    <location>
        <begin position="66"/>
        <end position="75"/>
    </location>
</feature>
<feature type="compositionally biased region" description="Gly residues" evidence="3">
    <location>
        <begin position="818"/>
        <end position="862"/>
    </location>
</feature>
<dbReference type="EMBL" id="DS027693">
    <property type="protein sequence ID" value="EAW20522.1"/>
    <property type="molecule type" value="Genomic_DNA"/>
</dbReference>
<dbReference type="RefSeq" id="XP_001262419.1">
    <property type="nucleotide sequence ID" value="XM_001262418.1"/>
</dbReference>
<dbReference type="SMR" id="A1D9P1"/>
<dbReference type="STRING" id="331117.A1D9P1"/>
<dbReference type="EnsemblFungi" id="EAW20522">
    <property type="protein sequence ID" value="EAW20522"/>
    <property type="gene ID" value="NFIA_029540"/>
</dbReference>
<dbReference type="GeneID" id="4589122"/>
<dbReference type="KEGG" id="nfi:NFIA_029540"/>
<dbReference type="VEuPathDB" id="FungiDB:NFIA_029540"/>
<dbReference type="eggNOG" id="KOG1076">
    <property type="taxonomic scope" value="Eukaryota"/>
</dbReference>
<dbReference type="HOGENOM" id="CLU_004304_0_2_1"/>
<dbReference type="OMA" id="FRCGLIK"/>
<dbReference type="OrthoDB" id="29647at2759"/>
<dbReference type="Proteomes" id="UP000006702">
    <property type="component" value="Unassembled WGS sequence"/>
</dbReference>
<dbReference type="GO" id="GO:0010494">
    <property type="term" value="C:cytoplasmic stress granule"/>
    <property type="evidence" value="ECO:0007669"/>
    <property type="project" value="EnsemblFungi"/>
</dbReference>
<dbReference type="GO" id="GO:0016282">
    <property type="term" value="C:eukaryotic 43S preinitiation complex"/>
    <property type="evidence" value="ECO:0007669"/>
    <property type="project" value="UniProtKB-UniRule"/>
</dbReference>
<dbReference type="GO" id="GO:0033290">
    <property type="term" value="C:eukaryotic 48S preinitiation complex"/>
    <property type="evidence" value="ECO:0007669"/>
    <property type="project" value="UniProtKB-UniRule"/>
</dbReference>
<dbReference type="GO" id="GO:0071540">
    <property type="term" value="C:eukaryotic translation initiation factor 3 complex, eIF3e"/>
    <property type="evidence" value="ECO:0007669"/>
    <property type="project" value="EnsemblFungi"/>
</dbReference>
<dbReference type="GO" id="GO:0071541">
    <property type="term" value="C:eukaryotic translation initiation factor 3 complex, eIF3m"/>
    <property type="evidence" value="ECO:0007669"/>
    <property type="project" value="EnsemblFungi"/>
</dbReference>
<dbReference type="GO" id="GO:0043614">
    <property type="term" value="C:multi-eIF complex"/>
    <property type="evidence" value="ECO:0007669"/>
    <property type="project" value="EnsemblFungi"/>
</dbReference>
<dbReference type="GO" id="GO:0003723">
    <property type="term" value="F:RNA binding"/>
    <property type="evidence" value="ECO:0007669"/>
    <property type="project" value="InterPro"/>
</dbReference>
<dbReference type="GO" id="GO:0003743">
    <property type="term" value="F:translation initiation factor activity"/>
    <property type="evidence" value="ECO:0007669"/>
    <property type="project" value="UniProtKB-UniRule"/>
</dbReference>
<dbReference type="GO" id="GO:0031369">
    <property type="term" value="F:translation initiation factor binding"/>
    <property type="evidence" value="ECO:0007669"/>
    <property type="project" value="EnsemblFungi"/>
</dbReference>
<dbReference type="GO" id="GO:0001732">
    <property type="term" value="P:formation of cytoplasmic translation initiation complex"/>
    <property type="evidence" value="ECO:0007669"/>
    <property type="project" value="UniProtKB-UniRule"/>
</dbReference>
<dbReference type="FunFam" id="1.10.10.10:FF:000300">
    <property type="entry name" value="Eukaryotic translation initiation factor 3 subunit C"/>
    <property type="match status" value="1"/>
</dbReference>
<dbReference type="Gene3D" id="1.10.10.10">
    <property type="entry name" value="Winged helix-like DNA-binding domain superfamily/Winged helix DNA-binding domain"/>
    <property type="match status" value="1"/>
</dbReference>
<dbReference type="HAMAP" id="MF_03002">
    <property type="entry name" value="eIF3c"/>
    <property type="match status" value="1"/>
</dbReference>
<dbReference type="InterPro" id="IPR027516">
    <property type="entry name" value="EIF3C"/>
</dbReference>
<dbReference type="InterPro" id="IPR008905">
    <property type="entry name" value="EIF3C_N_dom"/>
</dbReference>
<dbReference type="InterPro" id="IPR000717">
    <property type="entry name" value="PCI_dom"/>
</dbReference>
<dbReference type="InterPro" id="IPR036388">
    <property type="entry name" value="WH-like_DNA-bd_sf"/>
</dbReference>
<dbReference type="InterPro" id="IPR036390">
    <property type="entry name" value="WH_DNA-bd_sf"/>
</dbReference>
<dbReference type="PANTHER" id="PTHR13937">
    <property type="entry name" value="EUKARYOTIC TRANSLATION INITATION FACTOR 3, SUBUNIT 8 EIF3S8 -RELATED"/>
    <property type="match status" value="1"/>
</dbReference>
<dbReference type="PANTHER" id="PTHR13937:SF0">
    <property type="entry name" value="EUKARYOTIC TRANSLATION INITIATION FACTOR 3 SUBUNIT C-RELATED"/>
    <property type="match status" value="1"/>
</dbReference>
<dbReference type="Pfam" id="PF05470">
    <property type="entry name" value="eIF-3c_N"/>
    <property type="match status" value="2"/>
</dbReference>
<dbReference type="Pfam" id="PF01399">
    <property type="entry name" value="PCI"/>
    <property type="match status" value="1"/>
</dbReference>
<dbReference type="SMART" id="SM00088">
    <property type="entry name" value="PINT"/>
    <property type="match status" value="1"/>
</dbReference>
<dbReference type="SUPFAM" id="SSF46785">
    <property type="entry name" value="Winged helix' DNA-binding domain"/>
    <property type="match status" value="1"/>
</dbReference>
<dbReference type="PROSITE" id="PS50250">
    <property type="entry name" value="PCI"/>
    <property type="match status" value="1"/>
</dbReference>
<proteinExistence type="inferred from homology"/>
<reference key="1">
    <citation type="journal article" date="2008" name="PLoS Genet.">
        <title>Genomic islands in the pathogenic filamentous fungus Aspergillus fumigatus.</title>
        <authorList>
            <person name="Fedorova N.D."/>
            <person name="Khaldi N."/>
            <person name="Joardar V.S."/>
            <person name="Maiti R."/>
            <person name="Amedeo P."/>
            <person name="Anderson M.J."/>
            <person name="Crabtree J."/>
            <person name="Silva J.C."/>
            <person name="Badger J.H."/>
            <person name="Albarraq A."/>
            <person name="Angiuoli S."/>
            <person name="Bussey H."/>
            <person name="Bowyer P."/>
            <person name="Cotty P.J."/>
            <person name="Dyer P.S."/>
            <person name="Egan A."/>
            <person name="Galens K."/>
            <person name="Fraser-Liggett C.M."/>
            <person name="Haas B.J."/>
            <person name="Inman J.M."/>
            <person name="Kent R."/>
            <person name="Lemieux S."/>
            <person name="Malavazi I."/>
            <person name="Orvis J."/>
            <person name="Roemer T."/>
            <person name="Ronning C.M."/>
            <person name="Sundaram J.P."/>
            <person name="Sutton G."/>
            <person name="Turner G."/>
            <person name="Venter J.C."/>
            <person name="White O.R."/>
            <person name="Whitty B.R."/>
            <person name="Youngman P."/>
            <person name="Wolfe K.H."/>
            <person name="Goldman G.H."/>
            <person name="Wortman J.R."/>
            <person name="Jiang B."/>
            <person name="Denning D.W."/>
            <person name="Nierman W.C."/>
        </authorList>
    </citation>
    <scope>NUCLEOTIDE SEQUENCE [LARGE SCALE GENOMIC DNA]</scope>
    <source>
        <strain>ATCC 1020 / DSM 3700 / CBS 544.65 / FGSC A1164 / JCM 1740 / NRRL 181 / WB 181</strain>
    </source>
</reference>